<name>NUON_KLEP7</name>
<feature type="chain" id="PRO_1000017379" description="NADH-quinone oxidoreductase subunit N">
    <location>
        <begin position="1"/>
        <end position="485"/>
    </location>
</feature>
<feature type="transmembrane region" description="Helical" evidence="1">
    <location>
        <begin position="8"/>
        <end position="28"/>
    </location>
</feature>
<feature type="transmembrane region" description="Helical" evidence="1">
    <location>
        <begin position="35"/>
        <end position="55"/>
    </location>
</feature>
<feature type="transmembrane region" description="Helical" evidence="1">
    <location>
        <begin position="75"/>
        <end position="95"/>
    </location>
</feature>
<feature type="transmembrane region" description="Helical" evidence="1">
    <location>
        <begin position="105"/>
        <end position="125"/>
    </location>
</feature>
<feature type="transmembrane region" description="Helical" evidence="1">
    <location>
        <begin position="127"/>
        <end position="147"/>
    </location>
</feature>
<feature type="transmembrane region" description="Helical" evidence="1">
    <location>
        <begin position="159"/>
        <end position="179"/>
    </location>
</feature>
<feature type="transmembrane region" description="Helical" evidence="1">
    <location>
        <begin position="203"/>
        <end position="223"/>
    </location>
</feature>
<feature type="transmembrane region" description="Helical" evidence="1">
    <location>
        <begin position="235"/>
        <end position="255"/>
    </location>
</feature>
<feature type="transmembrane region" description="Helical" evidence="1">
    <location>
        <begin position="271"/>
        <end position="291"/>
    </location>
</feature>
<feature type="transmembrane region" description="Helical" evidence="1">
    <location>
        <begin position="297"/>
        <end position="317"/>
    </location>
</feature>
<feature type="transmembrane region" description="Helical" evidence="1">
    <location>
        <begin position="326"/>
        <end position="346"/>
    </location>
</feature>
<feature type="transmembrane region" description="Helical" evidence="1">
    <location>
        <begin position="374"/>
        <end position="394"/>
    </location>
</feature>
<feature type="transmembrane region" description="Helical" evidence="1">
    <location>
        <begin position="408"/>
        <end position="430"/>
    </location>
</feature>
<feature type="transmembrane region" description="Helical" evidence="1">
    <location>
        <begin position="455"/>
        <end position="475"/>
    </location>
</feature>
<organism>
    <name type="scientific">Klebsiella pneumoniae subsp. pneumoniae (strain ATCC 700721 / MGH 78578)</name>
    <dbReference type="NCBI Taxonomy" id="272620"/>
    <lineage>
        <taxon>Bacteria</taxon>
        <taxon>Pseudomonadati</taxon>
        <taxon>Pseudomonadota</taxon>
        <taxon>Gammaproteobacteria</taxon>
        <taxon>Enterobacterales</taxon>
        <taxon>Enterobacteriaceae</taxon>
        <taxon>Klebsiella/Raoultella group</taxon>
        <taxon>Klebsiella</taxon>
        <taxon>Klebsiella pneumoniae complex</taxon>
    </lineage>
</organism>
<gene>
    <name evidence="1" type="primary">nuoN</name>
    <name type="ordered locus">KPN78578_26220</name>
    <name type="ORF">KPN_02666</name>
</gene>
<sequence>MTITPQQLIALLPLLIVGLTVVVVMLSIAWRRNHFLNATLSVLGLNAALVSLWFVGQNGAMDVTPLIRVDGYAMLYTGLVLLASLATCTFAYPWLEGYKDNKEEFYLLVLIAALGGILLAGANHLAALFLGIELISLPLFGLVGYAFRQKRSLEASIKYTILSAAASSFLLFGMALVYANSGNLSFLALGKSLADNMLHEPLLLAGLGLMIVGLGFKLSLVPFHLWTPDVYQGAPAPVSTFLATASKIAIFGVVMRLFLYMPVGNSEAVRVVLGLIAFASIIFGNLMALSQTNIKRLLGYSSISHLGYLLVALIALQSGEMSMEAVGVYLAGYLFSSLGAFGVVSLMSSPYRGPDADSLFSYRGLFWHRPILSAVMTVMMLSLAGIPMTLGFIGKFYVLAVGVHAHLWWLVAAVVVGSAIGLYYYLRVAVSLYLSAPEQLNRDAPSNWQYSAGGIVVLISALLVLVLGIWPQPLISIVQLATPLM</sequence>
<protein>
    <recommendedName>
        <fullName evidence="1">NADH-quinone oxidoreductase subunit N</fullName>
        <ecNumber evidence="1">7.1.1.-</ecNumber>
    </recommendedName>
    <alternativeName>
        <fullName evidence="1">NADH dehydrogenase I subunit N</fullName>
    </alternativeName>
    <alternativeName>
        <fullName evidence="1">NDH-1 subunit N</fullName>
    </alternativeName>
</protein>
<reference key="1">
    <citation type="submission" date="2006-09" db="EMBL/GenBank/DDBJ databases">
        <authorList>
            <consortium name="The Klebsiella pneumonia Genome Sequencing Project"/>
            <person name="McClelland M."/>
            <person name="Sanderson E.K."/>
            <person name="Spieth J."/>
            <person name="Clifton W.S."/>
            <person name="Latreille P."/>
            <person name="Sabo A."/>
            <person name="Pepin K."/>
            <person name="Bhonagiri V."/>
            <person name="Porwollik S."/>
            <person name="Ali J."/>
            <person name="Wilson R.K."/>
        </authorList>
    </citation>
    <scope>NUCLEOTIDE SEQUENCE [LARGE SCALE GENOMIC DNA]</scope>
    <source>
        <strain>ATCC 700721 / MGH 78578</strain>
    </source>
</reference>
<proteinExistence type="inferred from homology"/>
<accession>A6TBW2</accession>
<dbReference type="EC" id="7.1.1.-" evidence="1"/>
<dbReference type="EMBL" id="CP000647">
    <property type="protein sequence ID" value="ABR78083.1"/>
    <property type="molecule type" value="Genomic_DNA"/>
</dbReference>
<dbReference type="RefSeq" id="WP_004151107.1">
    <property type="nucleotide sequence ID" value="NC_009648.1"/>
</dbReference>
<dbReference type="SMR" id="A6TBW2"/>
<dbReference type="STRING" id="272620.KPN_02666"/>
<dbReference type="PaxDb" id="272620-KPN_02666"/>
<dbReference type="EnsemblBacteria" id="ABR78083">
    <property type="protein sequence ID" value="ABR78083"/>
    <property type="gene ID" value="KPN_02666"/>
</dbReference>
<dbReference type="KEGG" id="kpn:KPN_02666"/>
<dbReference type="HOGENOM" id="CLU_007100_1_5_6"/>
<dbReference type="Proteomes" id="UP000000265">
    <property type="component" value="Chromosome"/>
</dbReference>
<dbReference type="GO" id="GO:0005886">
    <property type="term" value="C:plasma membrane"/>
    <property type="evidence" value="ECO:0007669"/>
    <property type="project" value="UniProtKB-SubCell"/>
</dbReference>
<dbReference type="GO" id="GO:0008137">
    <property type="term" value="F:NADH dehydrogenase (ubiquinone) activity"/>
    <property type="evidence" value="ECO:0007669"/>
    <property type="project" value="InterPro"/>
</dbReference>
<dbReference type="GO" id="GO:0050136">
    <property type="term" value="F:NADH:ubiquinone reductase (non-electrogenic) activity"/>
    <property type="evidence" value="ECO:0007669"/>
    <property type="project" value="UniProtKB-UniRule"/>
</dbReference>
<dbReference type="GO" id="GO:0048038">
    <property type="term" value="F:quinone binding"/>
    <property type="evidence" value="ECO:0007669"/>
    <property type="project" value="UniProtKB-KW"/>
</dbReference>
<dbReference type="GO" id="GO:0042773">
    <property type="term" value="P:ATP synthesis coupled electron transport"/>
    <property type="evidence" value="ECO:0007669"/>
    <property type="project" value="InterPro"/>
</dbReference>
<dbReference type="HAMAP" id="MF_00445">
    <property type="entry name" value="NDH1_NuoN_1"/>
    <property type="match status" value="1"/>
</dbReference>
<dbReference type="InterPro" id="IPR010096">
    <property type="entry name" value="NADH-Q_OxRdtase_suN/2"/>
</dbReference>
<dbReference type="InterPro" id="IPR001750">
    <property type="entry name" value="ND/Mrp_TM"/>
</dbReference>
<dbReference type="NCBIfam" id="TIGR01770">
    <property type="entry name" value="NDH_I_N"/>
    <property type="match status" value="1"/>
</dbReference>
<dbReference type="NCBIfam" id="NF004439">
    <property type="entry name" value="PRK05777.1-1"/>
    <property type="match status" value="1"/>
</dbReference>
<dbReference type="PANTHER" id="PTHR22773">
    <property type="entry name" value="NADH DEHYDROGENASE"/>
    <property type="match status" value="1"/>
</dbReference>
<dbReference type="Pfam" id="PF00361">
    <property type="entry name" value="Proton_antipo_M"/>
    <property type="match status" value="1"/>
</dbReference>
<keyword id="KW-0997">Cell inner membrane</keyword>
<keyword id="KW-1003">Cell membrane</keyword>
<keyword id="KW-0472">Membrane</keyword>
<keyword id="KW-0520">NAD</keyword>
<keyword id="KW-0874">Quinone</keyword>
<keyword id="KW-1278">Translocase</keyword>
<keyword id="KW-0812">Transmembrane</keyword>
<keyword id="KW-1133">Transmembrane helix</keyword>
<keyword id="KW-0813">Transport</keyword>
<keyword id="KW-0830">Ubiquinone</keyword>
<comment type="function">
    <text evidence="1">NDH-1 shuttles electrons from NADH, via FMN and iron-sulfur (Fe-S) centers, to quinones in the respiratory chain. The immediate electron acceptor for the enzyme in this species is believed to be ubiquinone. Couples the redox reaction to proton translocation (for every two electrons transferred, four hydrogen ions are translocated across the cytoplasmic membrane), and thus conserves the redox energy in a proton gradient.</text>
</comment>
<comment type="catalytic activity">
    <reaction evidence="1">
        <text>a quinone + NADH + 5 H(+)(in) = a quinol + NAD(+) + 4 H(+)(out)</text>
        <dbReference type="Rhea" id="RHEA:57888"/>
        <dbReference type="ChEBI" id="CHEBI:15378"/>
        <dbReference type="ChEBI" id="CHEBI:24646"/>
        <dbReference type="ChEBI" id="CHEBI:57540"/>
        <dbReference type="ChEBI" id="CHEBI:57945"/>
        <dbReference type="ChEBI" id="CHEBI:132124"/>
    </reaction>
</comment>
<comment type="subunit">
    <text evidence="1">NDH-1 is composed of 13 different subunits. Subunits NuoA, H, J, K, L, M, N constitute the membrane sector of the complex.</text>
</comment>
<comment type="subcellular location">
    <subcellularLocation>
        <location evidence="1">Cell inner membrane</location>
        <topology evidence="1">Multi-pass membrane protein</topology>
    </subcellularLocation>
</comment>
<comment type="similarity">
    <text evidence="1">Belongs to the complex I subunit 2 family.</text>
</comment>
<evidence type="ECO:0000255" key="1">
    <source>
        <dbReference type="HAMAP-Rule" id="MF_00445"/>
    </source>
</evidence>